<dbReference type="EC" id="2.7.11.-" evidence="1"/>
<dbReference type="EC" id="2.7.4.-" evidence="1"/>
<dbReference type="EMBL" id="BX640450">
    <property type="protein sequence ID" value="CAE34871.1"/>
    <property type="molecule type" value="Genomic_DNA"/>
</dbReference>
<dbReference type="RefSeq" id="WP_003815180.1">
    <property type="nucleotide sequence ID" value="NC_002927.3"/>
</dbReference>
<dbReference type="SMR" id="Q7U381"/>
<dbReference type="GeneID" id="93205834"/>
<dbReference type="KEGG" id="bbr:BB4508"/>
<dbReference type="eggNOG" id="COG1493">
    <property type="taxonomic scope" value="Bacteria"/>
</dbReference>
<dbReference type="HOGENOM" id="CLU_052030_0_2_4"/>
<dbReference type="Proteomes" id="UP000001027">
    <property type="component" value="Chromosome"/>
</dbReference>
<dbReference type="GO" id="GO:0005524">
    <property type="term" value="F:ATP binding"/>
    <property type="evidence" value="ECO:0007669"/>
    <property type="project" value="UniProtKB-UniRule"/>
</dbReference>
<dbReference type="GO" id="GO:0000287">
    <property type="term" value="F:magnesium ion binding"/>
    <property type="evidence" value="ECO:0007669"/>
    <property type="project" value="UniProtKB-UniRule"/>
</dbReference>
<dbReference type="GO" id="GO:0000155">
    <property type="term" value="F:phosphorelay sensor kinase activity"/>
    <property type="evidence" value="ECO:0007669"/>
    <property type="project" value="InterPro"/>
</dbReference>
<dbReference type="GO" id="GO:0004674">
    <property type="term" value="F:protein serine/threonine kinase activity"/>
    <property type="evidence" value="ECO:0007669"/>
    <property type="project" value="UniProtKB-KW"/>
</dbReference>
<dbReference type="GO" id="GO:0004712">
    <property type="term" value="F:protein serine/threonine/tyrosine kinase activity"/>
    <property type="evidence" value="ECO:0007669"/>
    <property type="project" value="UniProtKB-UniRule"/>
</dbReference>
<dbReference type="GO" id="GO:0006109">
    <property type="term" value="P:regulation of carbohydrate metabolic process"/>
    <property type="evidence" value="ECO:0007669"/>
    <property type="project" value="UniProtKB-UniRule"/>
</dbReference>
<dbReference type="CDD" id="cd01918">
    <property type="entry name" value="HprK_C"/>
    <property type="match status" value="1"/>
</dbReference>
<dbReference type="FunFam" id="3.40.50.300:FF:000174">
    <property type="entry name" value="HPr kinase/phosphorylase"/>
    <property type="match status" value="1"/>
</dbReference>
<dbReference type="Gene3D" id="3.40.1390.20">
    <property type="entry name" value="HprK N-terminal domain-like"/>
    <property type="match status" value="1"/>
</dbReference>
<dbReference type="Gene3D" id="3.40.50.300">
    <property type="entry name" value="P-loop containing nucleotide triphosphate hydrolases"/>
    <property type="match status" value="1"/>
</dbReference>
<dbReference type="HAMAP" id="MF_01249">
    <property type="entry name" value="HPr_kinase"/>
    <property type="match status" value="1"/>
</dbReference>
<dbReference type="InterPro" id="IPR003755">
    <property type="entry name" value="HPr(Ser)_kin/Pase"/>
</dbReference>
<dbReference type="InterPro" id="IPR011104">
    <property type="entry name" value="Hpr_kin/Pase_C"/>
</dbReference>
<dbReference type="InterPro" id="IPR011126">
    <property type="entry name" value="Hpr_kin/Pase_Hpr_N"/>
</dbReference>
<dbReference type="InterPro" id="IPR027417">
    <property type="entry name" value="P-loop_NTPase"/>
</dbReference>
<dbReference type="InterPro" id="IPR028979">
    <property type="entry name" value="Ser_kin/Pase_Hpr-like_N_sf"/>
</dbReference>
<dbReference type="NCBIfam" id="TIGR00679">
    <property type="entry name" value="hpr-ser"/>
    <property type="match status" value="1"/>
</dbReference>
<dbReference type="PANTHER" id="PTHR30305:SF1">
    <property type="entry name" value="HPR KINASE_PHOSPHORYLASE"/>
    <property type="match status" value="1"/>
</dbReference>
<dbReference type="PANTHER" id="PTHR30305">
    <property type="entry name" value="PROTEIN YJDM-RELATED"/>
    <property type="match status" value="1"/>
</dbReference>
<dbReference type="Pfam" id="PF07475">
    <property type="entry name" value="Hpr_kinase_C"/>
    <property type="match status" value="1"/>
</dbReference>
<dbReference type="Pfam" id="PF02603">
    <property type="entry name" value="Hpr_kinase_N"/>
    <property type="match status" value="1"/>
</dbReference>
<dbReference type="SUPFAM" id="SSF75138">
    <property type="entry name" value="HprK N-terminal domain-like"/>
    <property type="match status" value="1"/>
</dbReference>
<dbReference type="SUPFAM" id="SSF53795">
    <property type="entry name" value="PEP carboxykinase-like"/>
    <property type="match status" value="1"/>
</dbReference>
<accession>Q7U381</accession>
<reference key="1">
    <citation type="journal article" date="2003" name="Nat. Genet.">
        <title>Comparative analysis of the genome sequences of Bordetella pertussis, Bordetella parapertussis and Bordetella bronchiseptica.</title>
        <authorList>
            <person name="Parkhill J."/>
            <person name="Sebaihia M."/>
            <person name="Preston A."/>
            <person name="Murphy L.D."/>
            <person name="Thomson N.R."/>
            <person name="Harris D.E."/>
            <person name="Holden M.T.G."/>
            <person name="Churcher C.M."/>
            <person name="Bentley S.D."/>
            <person name="Mungall K.L."/>
            <person name="Cerdeno-Tarraga A.-M."/>
            <person name="Temple L."/>
            <person name="James K.D."/>
            <person name="Harris B."/>
            <person name="Quail M.A."/>
            <person name="Achtman M."/>
            <person name="Atkin R."/>
            <person name="Baker S."/>
            <person name="Basham D."/>
            <person name="Bason N."/>
            <person name="Cherevach I."/>
            <person name="Chillingworth T."/>
            <person name="Collins M."/>
            <person name="Cronin A."/>
            <person name="Davis P."/>
            <person name="Doggett J."/>
            <person name="Feltwell T."/>
            <person name="Goble A."/>
            <person name="Hamlin N."/>
            <person name="Hauser H."/>
            <person name="Holroyd S."/>
            <person name="Jagels K."/>
            <person name="Leather S."/>
            <person name="Moule S."/>
            <person name="Norberczak H."/>
            <person name="O'Neil S."/>
            <person name="Ormond D."/>
            <person name="Price C."/>
            <person name="Rabbinowitsch E."/>
            <person name="Rutter S."/>
            <person name="Sanders M."/>
            <person name="Saunders D."/>
            <person name="Seeger K."/>
            <person name="Sharp S."/>
            <person name="Simmonds M."/>
            <person name="Skelton J."/>
            <person name="Squares R."/>
            <person name="Squares S."/>
            <person name="Stevens K."/>
            <person name="Unwin L."/>
            <person name="Whitehead S."/>
            <person name="Barrell B.G."/>
            <person name="Maskell D.J."/>
        </authorList>
    </citation>
    <scope>NUCLEOTIDE SEQUENCE [LARGE SCALE GENOMIC DNA]</scope>
    <source>
        <strain>ATCC BAA-588 / NCTC 13252 / RB50</strain>
    </source>
</reference>
<gene>
    <name evidence="1" type="primary">hprK</name>
    <name type="ordered locus">BB4508</name>
</gene>
<name>HPRK_BORBR</name>
<comment type="function">
    <text evidence="1">Catalyzes the ATP- as well as the pyrophosphate-dependent phosphorylation of a specific serine residue in HPr, a phosphocarrier protein of the phosphoenolpyruvate-dependent sugar phosphotransferase system (PTS). HprK/P also catalyzes the pyrophosphate-producing, inorganic phosphate-dependent dephosphorylation (phosphorolysis) of seryl-phosphorylated HPr (P-Ser-HPr).</text>
</comment>
<comment type="catalytic activity">
    <reaction evidence="1">
        <text>[HPr protein]-L-serine + ATP = [HPr protein]-O-phospho-L-serine + ADP + H(+)</text>
        <dbReference type="Rhea" id="RHEA:46600"/>
        <dbReference type="Rhea" id="RHEA-COMP:11602"/>
        <dbReference type="Rhea" id="RHEA-COMP:11603"/>
        <dbReference type="ChEBI" id="CHEBI:15378"/>
        <dbReference type="ChEBI" id="CHEBI:29999"/>
        <dbReference type="ChEBI" id="CHEBI:30616"/>
        <dbReference type="ChEBI" id="CHEBI:83421"/>
        <dbReference type="ChEBI" id="CHEBI:456216"/>
    </reaction>
</comment>
<comment type="catalytic activity">
    <reaction evidence="1">
        <text>[HPr protein]-O-phospho-L-serine + phosphate + H(+) = [HPr protein]-L-serine + diphosphate</text>
        <dbReference type="Rhea" id="RHEA:46604"/>
        <dbReference type="Rhea" id="RHEA-COMP:11602"/>
        <dbReference type="Rhea" id="RHEA-COMP:11603"/>
        <dbReference type="ChEBI" id="CHEBI:15378"/>
        <dbReference type="ChEBI" id="CHEBI:29999"/>
        <dbReference type="ChEBI" id="CHEBI:33019"/>
        <dbReference type="ChEBI" id="CHEBI:43474"/>
        <dbReference type="ChEBI" id="CHEBI:83421"/>
    </reaction>
</comment>
<comment type="cofactor">
    <cofactor evidence="1">
        <name>Mg(2+)</name>
        <dbReference type="ChEBI" id="CHEBI:18420"/>
    </cofactor>
</comment>
<comment type="subunit">
    <text evidence="1">Homohexamer.</text>
</comment>
<comment type="domain">
    <text evidence="1">The Walker A ATP-binding motif also binds Pi and PPi.</text>
</comment>
<comment type="miscellaneous">
    <text evidence="1">Both phosphorylation and phosphorolysis are carried out by the same active site and suggest a common mechanism for both reactions.</text>
</comment>
<comment type="similarity">
    <text evidence="1">Belongs to the HPrK/P family.</text>
</comment>
<protein>
    <recommendedName>
        <fullName evidence="1">HPr kinase/phosphorylase</fullName>
        <shortName evidence="1">HPrK/P</shortName>
        <ecNumber evidence="1">2.7.11.-</ecNumber>
        <ecNumber evidence="1">2.7.4.-</ecNumber>
    </recommendedName>
    <alternativeName>
        <fullName evidence="1">HPr(Ser) kinase/phosphorylase</fullName>
    </alternativeName>
</protein>
<proteinExistence type="inferred from homology"/>
<sequence length="308" mass="33698">MLTVQELVDDNADKIPFSWIAGHDAADRAIPDDGMAAADLVGHLNLIHPSRIQVFGQEELAYYTRFDLRRRMHHMDELLIGGVPAILLADGLTPPQDLIDQCAQHQVPLLSTPVAAAQLIDLLRIYLGKKLAPTTTVHGVFLDVLGLGVLITGESGLGKSELALELISRGHGLVADDAVELSRTAPGVIEGHCPQLLQNLLEVRGLGLLDIRTIFGETSVRRKMRLKLIVHLVRATAQDKFERLPLQDITQDMLGLPIRKVMLQVAAGRNLAVLVEAAVRNTILKLRGIDTLGEFMERQAMAILQSSK</sequence>
<feature type="chain" id="PRO_0000058947" description="HPr kinase/phosphorylase">
    <location>
        <begin position="1"/>
        <end position="308"/>
    </location>
</feature>
<feature type="region of interest" description="Important for the catalytic mechanism of both phosphorylation and dephosphorylation" evidence="1">
    <location>
        <begin position="201"/>
        <end position="210"/>
    </location>
</feature>
<feature type="region of interest" description="Important for the catalytic mechanism of dephosphorylation" evidence="1">
    <location>
        <begin position="264"/>
        <end position="269"/>
    </location>
</feature>
<feature type="active site" evidence="1">
    <location>
        <position position="138"/>
    </location>
</feature>
<feature type="active site" evidence="1">
    <location>
        <position position="159"/>
    </location>
</feature>
<feature type="active site" description="Proton acceptor; for phosphorylation activity. Proton donor; for dephosphorylation activity" evidence="1">
    <location>
        <position position="177"/>
    </location>
</feature>
<feature type="active site" evidence="1">
    <location>
        <position position="243"/>
    </location>
</feature>
<feature type="binding site" evidence="1">
    <location>
        <begin position="153"/>
        <end position="160"/>
    </location>
    <ligand>
        <name>ATP</name>
        <dbReference type="ChEBI" id="CHEBI:30616"/>
    </ligand>
</feature>
<feature type="binding site" evidence="1">
    <location>
        <position position="160"/>
    </location>
    <ligand>
        <name>Mg(2+)</name>
        <dbReference type="ChEBI" id="CHEBI:18420"/>
    </ligand>
</feature>
<feature type="binding site" evidence="1">
    <location>
        <position position="202"/>
    </location>
    <ligand>
        <name>Mg(2+)</name>
        <dbReference type="ChEBI" id="CHEBI:18420"/>
    </ligand>
</feature>
<organism>
    <name type="scientific">Bordetella bronchiseptica (strain ATCC BAA-588 / NCTC 13252 / RB50)</name>
    <name type="common">Alcaligenes bronchisepticus</name>
    <dbReference type="NCBI Taxonomy" id="257310"/>
    <lineage>
        <taxon>Bacteria</taxon>
        <taxon>Pseudomonadati</taxon>
        <taxon>Pseudomonadota</taxon>
        <taxon>Betaproteobacteria</taxon>
        <taxon>Burkholderiales</taxon>
        <taxon>Alcaligenaceae</taxon>
        <taxon>Bordetella</taxon>
    </lineage>
</organism>
<evidence type="ECO:0000255" key="1">
    <source>
        <dbReference type="HAMAP-Rule" id="MF_01249"/>
    </source>
</evidence>
<keyword id="KW-0067">ATP-binding</keyword>
<keyword id="KW-0418">Kinase</keyword>
<keyword id="KW-0460">Magnesium</keyword>
<keyword id="KW-0479">Metal-binding</keyword>
<keyword id="KW-0511">Multifunctional enzyme</keyword>
<keyword id="KW-0547">Nucleotide-binding</keyword>
<keyword id="KW-0723">Serine/threonine-protein kinase</keyword>
<keyword id="KW-0808">Transferase</keyword>